<gene>
    <name evidence="1" type="primary">spoVG</name>
    <name type="ordered locus">SAOUHSC_00469</name>
</gene>
<evidence type="ECO:0000255" key="1">
    <source>
        <dbReference type="HAMAP-Rule" id="MF_00819"/>
    </source>
</evidence>
<protein>
    <recommendedName>
        <fullName evidence="1">Putative septation protein SpoVG</fullName>
    </recommendedName>
</protein>
<reference key="1">
    <citation type="book" date="2006" name="Gram positive pathogens, 2nd edition">
        <title>The Staphylococcus aureus NCTC 8325 genome.</title>
        <editorList>
            <person name="Fischetti V."/>
            <person name="Novick R."/>
            <person name="Ferretti J."/>
            <person name="Portnoy D."/>
            <person name="Rood J."/>
        </editorList>
        <authorList>
            <person name="Gillaspy A.F."/>
            <person name="Worrell V."/>
            <person name="Orvis J."/>
            <person name="Roe B.A."/>
            <person name="Dyer D.W."/>
            <person name="Iandolo J.J."/>
        </authorList>
    </citation>
    <scope>NUCLEOTIDE SEQUENCE [LARGE SCALE GENOMIC DNA]</scope>
    <source>
        <strain>NCTC 8325 / PS 47</strain>
    </source>
</reference>
<feature type="chain" id="PRO_1000062436" description="Putative septation protein SpoVG">
    <location>
        <begin position="1"/>
        <end position="100"/>
    </location>
</feature>
<dbReference type="EMBL" id="CP000253">
    <property type="protein sequence ID" value="ABD29624.1"/>
    <property type="molecule type" value="Genomic_DNA"/>
</dbReference>
<dbReference type="RefSeq" id="WP_000868999.1">
    <property type="nucleotide sequence ID" value="NZ_LS483365.1"/>
</dbReference>
<dbReference type="RefSeq" id="YP_499048.1">
    <property type="nucleotide sequence ID" value="NC_007795.1"/>
</dbReference>
<dbReference type="SMR" id="Q2G0S5"/>
<dbReference type="STRING" id="93061.SAOUHSC_00469"/>
<dbReference type="PaxDb" id="1280-SAXN108_0549"/>
<dbReference type="GeneID" id="3920329"/>
<dbReference type="KEGG" id="sao:SAOUHSC_00469"/>
<dbReference type="PATRIC" id="fig|93061.5.peg.424"/>
<dbReference type="eggNOG" id="COG2088">
    <property type="taxonomic scope" value="Bacteria"/>
</dbReference>
<dbReference type="HOGENOM" id="CLU_103669_2_1_9"/>
<dbReference type="OrthoDB" id="9796286at2"/>
<dbReference type="PRO" id="PR:Q2G0S5"/>
<dbReference type="Proteomes" id="UP000008816">
    <property type="component" value="Chromosome"/>
</dbReference>
<dbReference type="GO" id="GO:0000917">
    <property type="term" value="P:division septum assembly"/>
    <property type="evidence" value="ECO:0007669"/>
    <property type="project" value="UniProtKB-KW"/>
</dbReference>
<dbReference type="GO" id="GO:0030435">
    <property type="term" value="P:sporulation resulting in formation of a cellular spore"/>
    <property type="evidence" value="ECO:0007669"/>
    <property type="project" value="InterPro"/>
</dbReference>
<dbReference type="Gene3D" id="3.30.1120.40">
    <property type="entry name" value="Stage V sporulation protein G"/>
    <property type="match status" value="1"/>
</dbReference>
<dbReference type="HAMAP" id="MF_00819">
    <property type="entry name" value="SpoVG"/>
    <property type="match status" value="1"/>
</dbReference>
<dbReference type="InterPro" id="IPR007170">
    <property type="entry name" value="SpoVG"/>
</dbReference>
<dbReference type="InterPro" id="IPR036751">
    <property type="entry name" value="SpoVG_sf"/>
</dbReference>
<dbReference type="NCBIfam" id="NF009749">
    <property type="entry name" value="PRK13259.1"/>
    <property type="match status" value="1"/>
</dbReference>
<dbReference type="PANTHER" id="PTHR38429">
    <property type="entry name" value="SEPTATION PROTEIN SPOVG-RELATED"/>
    <property type="match status" value="1"/>
</dbReference>
<dbReference type="PANTHER" id="PTHR38429:SF1">
    <property type="entry name" value="SEPTATION PROTEIN SPOVG-RELATED"/>
    <property type="match status" value="1"/>
</dbReference>
<dbReference type="Pfam" id="PF04026">
    <property type="entry name" value="SpoVG"/>
    <property type="match status" value="1"/>
</dbReference>
<dbReference type="SUPFAM" id="SSF160537">
    <property type="entry name" value="SpoVG-like"/>
    <property type="match status" value="1"/>
</dbReference>
<sequence length="100" mass="11278">MKVTDVRLRKIQTDGRMKALVSITLDEAFVIHDLRVIEGNSGLFVAMPSKRTPDGEFRDIAHPINSDMRQEIQDAVMKVYDETDEVVPDKNATSEDSEEA</sequence>
<proteinExistence type="inferred from homology"/>
<organism>
    <name type="scientific">Staphylococcus aureus (strain NCTC 8325 / PS 47)</name>
    <dbReference type="NCBI Taxonomy" id="93061"/>
    <lineage>
        <taxon>Bacteria</taxon>
        <taxon>Bacillati</taxon>
        <taxon>Bacillota</taxon>
        <taxon>Bacilli</taxon>
        <taxon>Bacillales</taxon>
        <taxon>Staphylococcaceae</taxon>
        <taxon>Staphylococcus</taxon>
    </lineage>
</organism>
<comment type="function">
    <text evidence="1">Could be involved in septation.</text>
</comment>
<comment type="similarity">
    <text evidence="1">Belongs to the SpoVG family.</text>
</comment>
<keyword id="KW-0131">Cell cycle</keyword>
<keyword id="KW-0132">Cell division</keyword>
<keyword id="KW-1185">Reference proteome</keyword>
<keyword id="KW-0717">Septation</keyword>
<name>SP5G_STAA8</name>
<accession>Q2G0S5</accession>